<sequence length="145" mass="15981">MKKSARRQSRELATQGLYQWLLSNAAPGEIDAQLRGALGYDKADKTLLDTILHGVIREHATLAEAISPSLDRPIDQLSPVERAVLLIATYELTHQIETPYRVIINEAVELAKTFGGSDGYKYVNGVLDKLAVKLRPAETQARRGA</sequence>
<gene>
    <name evidence="1" type="primary">nusB</name>
    <name type="ordered locus">BURPS668_3018</name>
</gene>
<name>NUSB_BURP6</name>
<dbReference type="EMBL" id="CP000570">
    <property type="protein sequence ID" value="ABN81626.1"/>
    <property type="molecule type" value="Genomic_DNA"/>
</dbReference>
<dbReference type="RefSeq" id="WP_004185707.1">
    <property type="nucleotide sequence ID" value="NC_009074.1"/>
</dbReference>
<dbReference type="SMR" id="A3NCG0"/>
<dbReference type="GeneID" id="93061205"/>
<dbReference type="KEGG" id="bpd:BURPS668_3018"/>
<dbReference type="HOGENOM" id="CLU_087843_4_1_4"/>
<dbReference type="GO" id="GO:0005829">
    <property type="term" value="C:cytosol"/>
    <property type="evidence" value="ECO:0007669"/>
    <property type="project" value="TreeGrafter"/>
</dbReference>
<dbReference type="GO" id="GO:0003723">
    <property type="term" value="F:RNA binding"/>
    <property type="evidence" value="ECO:0007669"/>
    <property type="project" value="UniProtKB-UniRule"/>
</dbReference>
<dbReference type="GO" id="GO:0006353">
    <property type="term" value="P:DNA-templated transcription termination"/>
    <property type="evidence" value="ECO:0007669"/>
    <property type="project" value="UniProtKB-UniRule"/>
</dbReference>
<dbReference type="GO" id="GO:0031564">
    <property type="term" value="P:transcription antitermination"/>
    <property type="evidence" value="ECO:0007669"/>
    <property type="project" value="UniProtKB-KW"/>
</dbReference>
<dbReference type="Gene3D" id="1.10.940.10">
    <property type="entry name" value="NusB-like"/>
    <property type="match status" value="1"/>
</dbReference>
<dbReference type="HAMAP" id="MF_00073">
    <property type="entry name" value="NusB"/>
    <property type="match status" value="1"/>
</dbReference>
<dbReference type="InterPro" id="IPR035926">
    <property type="entry name" value="NusB-like_sf"/>
</dbReference>
<dbReference type="InterPro" id="IPR011605">
    <property type="entry name" value="NusB_fam"/>
</dbReference>
<dbReference type="InterPro" id="IPR006027">
    <property type="entry name" value="NusB_RsmB_TIM44"/>
</dbReference>
<dbReference type="NCBIfam" id="TIGR01951">
    <property type="entry name" value="nusB"/>
    <property type="match status" value="1"/>
</dbReference>
<dbReference type="PANTHER" id="PTHR11078:SF3">
    <property type="entry name" value="ANTITERMINATION NUSB DOMAIN-CONTAINING PROTEIN"/>
    <property type="match status" value="1"/>
</dbReference>
<dbReference type="PANTHER" id="PTHR11078">
    <property type="entry name" value="N UTILIZATION SUBSTANCE PROTEIN B-RELATED"/>
    <property type="match status" value="1"/>
</dbReference>
<dbReference type="Pfam" id="PF01029">
    <property type="entry name" value="NusB"/>
    <property type="match status" value="1"/>
</dbReference>
<dbReference type="SUPFAM" id="SSF48013">
    <property type="entry name" value="NusB-like"/>
    <property type="match status" value="1"/>
</dbReference>
<organism>
    <name type="scientific">Burkholderia pseudomallei (strain 668)</name>
    <dbReference type="NCBI Taxonomy" id="320373"/>
    <lineage>
        <taxon>Bacteria</taxon>
        <taxon>Pseudomonadati</taxon>
        <taxon>Pseudomonadota</taxon>
        <taxon>Betaproteobacteria</taxon>
        <taxon>Burkholderiales</taxon>
        <taxon>Burkholderiaceae</taxon>
        <taxon>Burkholderia</taxon>
        <taxon>pseudomallei group</taxon>
    </lineage>
</organism>
<reference key="1">
    <citation type="journal article" date="2010" name="Genome Biol. Evol.">
        <title>Continuing evolution of Burkholderia mallei through genome reduction and large-scale rearrangements.</title>
        <authorList>
            <person name="Losada L."/>
            <person name="Ronning C.M."/>
            <person name="DeShazer D."/>
            <person name="Woods D."/>
            <person name="Fedorova N."/>
            <person name="Kim H.S."/>
            <person name="Shabalina S.A."/>
            <person name="Pearson T.R."/>
            <person name="Brinkac L."/>
            <person name="Tan P."/>
            <person name="Nandi T."/>
            <person name="Crabtree J."/>
            <person name="Badger J."/>
            <person name="Beckstrom-Sternberg S."/>
            <person name="Saqib M."/>
            <person name="Schutzer S.E."/>
            <person name="Keim P."/>
            <person name="Nierman W.C."/>
        </authorList>
    </citation>
    <scope>NUCLEOTIDE SEQUENCE [LARGE SCALE GENOMIC DNA]</scope>
    <source>
        <strain>668</strain>
    </source>
</reference>
<protein>
    <recommendedName>
        <fullName evidence="1">Transcription antitermination protein NusB</fullName>
    </recommendedName>
    <alternativeName>
        <fullName evidence="1">Antitermination factor NusB</fullName>
    </alternativeName>
</protein>
<feature type="chain" id="PRO_1000023717" description="Transcription antitermination protein NusB">
    <location>
        <begin position="1"/>
        <end position="145"/>
    </location>
</feature>
<comment type="function">
    <text evidence="1">Involved in transcription antitermination. Required for transcription of ribosomal RNA (rRNA) genes. Binds specifically to the boxA antiterminator sequence of the ribosomal RNA (rrn) operons.</text>
</comment>
<comment type="similarity">
    <text evidence="1">Belongs to the NusB family.</text>
</comment>
<accession>A3NCG0</accession>
<keyword id="KW-0694">RNA-binding</keyword>
<keyword id="KW-0804">Transcription</keyword>
<keyword id="KW-0889">Transcription antitermination</keyword>
<keyword id="KW-0805">Transcription regulation</keyword>
<proteinExistence type="inferred from homology"/>
<evidence type="ECO:0000255" key="1">
    <source>
        <dbReference type="HAMAP-Rule" id="MF_00073"/>
    </source>
</evidence>